<proteinExistence type="evidence at protein level"/>
<sequence length="603" mass="67374">MLSPERRPSMAERRPSFFSFTQNPSPLVVPHLAGIEDPLPATTPDKVDVLIAGTGMVESVLAAALAWQGSNVLHIDKNDYYGDTSATLTVDQIKRWVNEVNEGSVSCYKNAKLYVSTLIGSGKYSSRDFGIDLSPKILFAKSDLLSILIKSRVHQYLEFQSLSNFHTYENDCFEKLTNTKQEIFTDQNLPLMTKRNLMKFIKFVLNWEAQTEIWQPYAERTMSDFLGEKFKLEKPQVFELIFSIGLCYDLNVKVPEALQRIRRYLTSFDVYGPFPALCSKYGGPGELSQGFCRSAAVGGATYKLNEKLVSFNPTTKVATFQDGSKVEVSEKVIISPTQAPKDSKHVPQQQYQVHRLTCIVENPCTEWFNEGESAAMVVFPPGSLKSGNKEVVQAFILGAGSEICPEGTIVWYLSTTEQGPRAEMDIDAALEAMEMALLRESSSGLENDEEIVQLTGNGHTIVNSVKLGQSFKEYVPRERLQFLFKLYYTQYTSTPPFGVVNSSFFDVNQDLEKKYIPGASDNGVIYTTMPSAEISYDEVVTAAKVLYEKIVGSDDDFFDLDFEDEDEIQASGVANAEQFENAIDDDDDVNMEGSGEFVGEMEI</sequence>
<organism>
    <name type="scientific">Saccharomyces cerevisiae (strain ATCC 204508 / S288c)</name>
    <name type="common">Baker's yeast</name>
    <dbReference type="NCBI Taxonomy" id="559292"/>
    <lineage>
        <taxon>Eukaryota</taxon>
        <taxon>Fungi</taxon>
        <taxon>Dikarya</taxon>
        <taxon>Ascomycota</taxon>
        <taxon>Saccharomycotina</taxon>
        <taxon>Saccharomycetes</taxon>
        <taxon>Saccharomycetales</taxon>
        <taxon>Saccharomycetaceae</taxon>
        <taxon>Saccharomyces</taxon>
    </lineage>
</organism>
<gene>
    <name type="primary">MRS6</name>
    <name type="synonym">MSI4</name>
    <name type="ordered locus">YOR370C</name>
</gene>
<name>RAEP_YEAST</name>
<keyword id="KW-0343">GTPase activation</keyword>
<keyword id="KW-0597">Phosphoprotein</keyword>
<keyword id="KW-1185">Reference proteome</keyword>
<accession>P32864</accession>
<accession>D6W363</accession>
<accession>Q06761</accession>
<comment type="function">
    <text>Substrate-binding subunit (component A) of the Rab geranylgeranyltransferase (GGTase) complex. Binds unprenylated Rab proteins and presents the substrate peptide to the catalytic component B. The component A is thought to be regenerated by transferring its prenylated Rab back to the donor membrane.</text>
</comment>
<comment type="interaction">
    <interactant intactId="EBI-14799">
        <id>P32864</id>
    </interactant>
    <interactant intactId="EBI-17035">
        <id>P32432</id>
        <label>SFP1</label>
    </interactant>
    <organismsDiffer>false</organismsDiffer>
    <experiments>6</experiments>
</comment>
<comment type="interaction">
    <interactant intactId="EBI-14799">
        <id>P32864</id>
    </interactant>
    <interactant intactId="EBI-29399">
        <id>P36017</id>
        <label>VPS21</label>
    </interactant>
    <organismsDiffer>false</organismsDiffer>
    <experiments>3</experiments>
</comment>
<comment type="interaction">
    <interactant intactId="EBI-14799">
        <id>P32864</id>
    </interactant>
    <interactant intactId="EBI-29357">
        <id>P38146</id>
        <label>YPT10</label>
    </interactant>
    <organismsDiffer>false</organismsDiffer>
    <experiments>3</experiments>
</comment>
<comment type="interaction">
    <interactant intactId="EBI-14799">
        <id>P32864</id>
    </interactant>
    <interactant intactId="EBI-29407">
        <id>P36018</id>
        <label>YPT52</label>
    </interactant>
    <organismsDiffer>false</organismsDiffer>
    <experiments>3</experiments>
</comment>
<comment type="miscellaneous">
    <text evidence="1">Present with 23800 molecules/cell in log phase SD medium.</text>
</comment>
<comment type="similarity">
    <text evidence="2">Belongs to the Rab GDI family.</text>
</comment>
<comment type="sequence caution" evidence="2">
    <conflict type="erroneous initiation">
        <sequence resource="EMBL-CDS" id="CAA49805"/>
    </conflict>
</comment>
<dbReference type="EMBL" id="D26441">
    <property type="protein sequence ID" value="BAA05460.1"/>
    <property type="molecule type" value="Genomic_DNA"/>
</dbReference>
<dbReference type="EMBL" id="X70339">
    <property type="protein sequence ID" value="CAA49804.1"/>
    <property type="molecule type" value="Genomic_DNA"/>
</dbReference>
<dbReference type="EMBL" id="X70339">
    <property type="protein sequence ID" value="CAA49805.1"/>
    <property type="status" value="ALT_INIT"/>
    <property type="molecule type" value="Genomic_DNA"/>
</dbReference>
<dbReference type="EMBL" id="Z75278">
    <property type="protein sequence ID" value="CAA99701.1"/>
    <property type="molecule type" value="Genomic_DNA"/>
</dbReference>
<dbReference type="EMBL" id="M90844">
    <property type="protein sequence ID" value="AAA34796.1"/>
    <property type="molecule type" value="Genomic_DNA"/>
</dbReference>
<dbReference type="EMBL" id="BK006948">
    <property type="protein sequence ID" value="DAA11129.1"/>
    <property type="molecule type" value="Genomic_DNA"/>
</dbReference>
<dbReference type="PIR" id="S47917">
    <property type="entry name" value="S47917"/>
</dbReference>
<dbReference type="RefSeq" id="NP_015015.1">
    <property type="nucleotide sequence ID" value="NM_001183790.1"/>
</dbReference>
<dbReference type="SMR" id="P32864"/>
<dbReference type="BioGRID" id="34753">
    <property type="interactions" value="388"/>
</dbReference>
<dbReference type="ComplexPortal" id="CPX-1636">
    <property type="entry name" value="Protein geranylgeranyltransferase type II complex"/>
</dbReference>
<dbReference type="DIP" id="DIP-2246N"/>
<dbReference type="FunCoup" id="P32864">
    <property type="interactions" value="261"/>
</dbReference>
<dbReference type="IntAct" id="P32864">
    <property type="interactions" value="18"/>
</dbReference>
<dbReference type="MINT" id="P32864"/>
<dbReference type="STRING" id="4932.YOR370C"/>
<dbReference type="iPTMnet" id="P32864"/>
<dbReference type="PaxDb" id="4932-YOR370C"/>
<dbReference type="PeptideAtlas" id="P32864"/>
<dbReference type="EnsemblFungi" id="YOR370C_mRNA">
    <property type="protein sequence ID" value="YOR370C"/>
    <property type="gene ID" value="YOR370C"/>
</dbReference>
<dbReference type="GeneID" id="854552"/>
<dbReference type="KEGG" id="sce:YOR370C"/>
<dbReference type="AGR" id="SGD:S000005897"/>
<dbReference type="SGD" id="S000005897">
    <property type="gene designation" value="MRS6"/>
</dbReference>
<dbReference type="VEuPathDB" id="FungiDB:YOR370C"/>
<dbReference type="eggNOG" id="KOG1439">
    <property type="taxonomic scope" value="Eukaryota"/>
</dbReference>
<dbReference type="GeneTree" id="ENSGT00950000182994"/>
<dbReference type="HOGENOM" id="CLU_021695_3_1_1"/>
<dbReference type="InParanoid" id="P32864"/>
<dbReference type="OMA" id="HQYLEFQ"/>
<dbReference type="OrthoDB" id="1923006at2759"/>
<dbReference type="BioCyc" id="YEAST:G3O-33838-MONOMER"/>
<dbReference type="Reactome" id="R-SCE-6803205">
    <property type="pathway name" value="TP53 regulates transcription of several additional cell death genes whose specific roles in p53-dependent apoptosis remain uncertain"/>
</dbReference>
<dbReference type="Reactome" id="R-SCE-8873719">
    <property type="pathway name" value="RAB geranylgeranylation"/>
</dbReference>
<dbReference type="Reactome" id="R-SCE-8876198">
    <property type="pathway name" value="RAB GEFs exchange GTP for GDP on RABs"/>
</dbReference>
<dbReference type="BioGRID-ORCS" id="854552">
    <property type="hits" value="10 hits in 10 CRISPR screens"/>
</dbReference>
<dbReference type="PRO" id="PR:P32864"/>
<dbReference type="Proteomes" id="UP000002311">
    <property type="component" value="Chromosome XV"/>
</dbReference>
<dbReference type="RNAct" id="P32864">
    <property type="molecule type" value="protein"/>
</dbReference>
<dbReference type="GO" id="GO:0005737">
    <property type="term" value="C:cytoplasm"/>
    <property type="evidence" value="ECO:0000314"/>
    <property type="project" value="SGD"/>
</dbReference>
<dbReference type="GO" id="GO:0005829">
    <property type="term" value="C:cytosol"/>
    <property type="evidence" value="ECO:0007005"/>
    <property type="project" value="SGD"/>
</dbReference>
<dbReference type="GO" id="GO:0016020">
    <property type="term" value="C:membrane"/>
    <property type="evidence" value="ECO:0000314"/>
    <property type="project" value="SGD"/>
</dbReference>
<dbReference type="GO" id="GO:0005634">
    <property type="term" value="C:nucleus"/>
    <property type="evidence" value="ECO:0007005"/>
    <property type="project" value="SGD"/>
</dbReference>
<dbReference type="GO" id="GO:0005968">
    <property type="term" value="C:Rab-protein geranylgeranyltransferase complex"/>
    <property type="evidence" value="ECO:0000314"/>
    <property type="project" value="SGD"/>
</dbReference>
<dbReference type="GO" id="GO:0005092">
    <property type="term" value="F:GDP-dissociation inhibitor activity"/>
    <property type="evidence" value="ECO:0007669"/>
    <property type="project" value="InterPro"/>
</dbReference>
<dbReference type="GO" id="GO:0005096">
    <property type="term" value="F:GTPase activator activity"/>
    <property type="evidence" value="ECO:0007669"/>
    <property type="project" value="UniProtKB-KW"/>
</dbReference>
<dbReference type="GO" id="GO:0031267">
    <property type="term" value="F:small GTPase binding"/>
    <property type="evidence" value="ECO:0000315"/>
    <property type="project" value="SGD"/>
</dbReference>
<dbReference type="GO" id="GO:0006888">
    <property type="term" value="P:endoplasmic reticulum to Golgi vesicle-mediated transport"/>
    <property type="evidence" value="ECO:0000315"/>
    <property type="project" value="SGD"/>
</dbReference>
<dbReference type="GO" id="GO:0006612">
    <property type="term" value="P:protein targeting to membrane"/>
    <property type="evidence" value="ECO:0000315"/>
    <property type="project" value="SGD"/>
</dbReference>
<dbReference type="GO" id="GO:0007264">
    <property type="term" value="P:small GTPase-mediated signal transduction"/>
    <property type="evidence" value="ECO:0007669"/>
    <property type="project" value="InterPro"/>
</dbReference>
<dbReference type="GO" id="GO:0016192">
    <property type="term" value="P:vesicle-mediated transport"/>
    <property type="evidence" value="ECO:0000318"/>
    <property type="project" value="GO_Central"/>
</dbReference>
<dbReference type="FunFam" id="1.10.405.10:FF:000003">
    <property type="entry name" value="Rab proteins geranylgeranyltransferase component A"/>
    <property type="match status" value="1"/>
</dbReference>
<dbReference type="Gene3D" id="3.50.50.60">
    <property type="entry name" value="FAD/NAD(P)-binding domain"/>
    <property type="match status" value="1"/>
</dbReference>
<dbReference type="Gene3D" id="1.10.405.10">
    <property type="entry name" value="Guanine Nucleotide Dissociation Inhibitor, domain 1"/>
    <property type="match status" value="1"/>
</dbReference>
<dbReference type="Gene3D" id="3.30.519.10">
    <property type="entry name" value="Guanine Nucleotide Dissociation Inhibitor, domain 2"/>
    <property type="match status" value="1"/>
</dbReference>
<dbReference type="InterPro" id="IPR036188">
    <property type="entry name" value="FAD/NAD-bd_sf"/>
</dbReference>
<dbReference type="InterPro" id="IPR018203">
    <property type="entry name" value="GDP_dissociation_inhibitor"/>
</dbReference>
<dbReference type="InterPro" id="IPR017230">
    <property type="entry name" value="Mrs6"/>
</dbReference>
<dbReference type="PANTHER" id="PTHR11787:SF4">
    <property type="entry name" value="CHM, RAB ESCORT PROTEIN 1"/>
    <property type="match status" value="1"/>
</dbReference>
<dbReference type="PANTHER" id="PTHR11787">
    <property type="entry name" value="RAB GDP-DISSOCIATION INHIBITOR"/>
    <property type="match status" value="1"/>
</dbReference>
<dbReference type="Pfam" id="PF00996">
    <property type="entry name" value="GDI"/>
    <property type="match status" value="1"/>
</dbReference>
<dbReference type="PIRSF" id="PIRSF037514">
    <property type="entry name" value="Rab_ger_ger_transf_A_fun"/>
    <property type="match status" value="1"/>
</dbReference>
<dbReference type="PRINTS" id="PR00891">
    <property type="entry name" value="RABGDIREP"/>
</dbReference>
<dbReference type="PRINTS" id="PR00894">
    <property type="entry name" value="YEASTMRS6P"/>
</dbReference>
<dbReference type="SUPFAM" id="SSF54373">
    <property type="entry name" value="FAD-linked reductases, C-terminal domain"/>
    <property type="match status" value="1"/>
</dbReference>
<dbReference type="SUPFAM" id="SSF51905">
    <property type="entry name" value="FAD/NAD(P)-binding domain"/>
    <property type="match status" value="1"/>
</dbReference>
<reference key="1">
    <citation type="journal article" date="1994" name="J. Biol. Chem.">
        <title>The Saccharomyces cerevisiae MSI4 gene encodes the yeast counterpart of component A of Rab geranylgeranyltransferase.</title>
        <authorList>
            <person name="Fujimura K."/>
            <person name="Tanaka K."/>
            <person name="Nakano A."/>
            <person name="Toh-e A."/>
        </authorList>
    </citation>
    <scope>NUCLEOTIDE SEQUENCE [GENOMIC DNA]</scope>
</reference>
<reference key="2">
    <citation type="journal article" date="1994" name="Curr. Genet.">
        <title>The yeast protein Mrs6p, a homologue of the rabGDI and human choroideraemia proteins, affects cytoplasmic and mitochondrial functions.</title>
        <authorList>
            <person name="Ragnini A."/>
            <person name="Teply R."/>
            <person name="Waldherr M."/>
            <person name="Voskova A."/>
            <person name="Schweyen R.J."/>
        </authorList>
    </citation>
    <scope>NUCLEOTIDE SEQUENCE [GENOMIC DNA]</scope>
</reference>
<reference key="3">
    <citation type="journal article" date="1997" name="Nature">
        <title>The nucleotide sequence of Saccharomyces cerevisiae chromosome XV.</title>
        <authorList>
            <person name="Dujon B."/>
            <person name="Albermann K."/>
            <person name="Aldea M."/>
            <person name="Alexandraki D."/>
            <person name="Ansorge W."/>
            <person name="Arino J."/>
            <person name="Benes V."/>
            <person name="Bohn C."/>
            <person name="Bolotin-Fukuhara M."/>
            <person name="Bordonne R."/>
            <person name="Boyer J."/>
            <person name="Camasses A."/>
            <person name="Casamayor A."/>
            <person name="Casas C."/>
            <person name="Cheret G."/>
            <person name="Cziepluch C."/>
            <person name="Daignan-Fornier B."/>
            <person name="Dang V.-D."/>
            <person name="de Haan M."/>
            <person name="Delius H."/>
            <person name="Durand P."/>
            <person name="Fairhead C."/>
            <person name="Feldmann H."/>
            <person name="Gaillon L."/>
            <person name="Galisson F."/>
            <person name="Gamo F.-J."/>
            <person name="Gancedo C."/>
            <person name="Goffeau A."/>
            <person name="Goulding S.E."/>
            <person name="Grivell L.A."/>
            <person name="Habbig B."/>
            <person name="Hand N.J."/>
            <person name="Hani J."/>
            <person name="Hattenhorst U."/>
            <person name="Hebling U."/>
            <person name="Hernando Y."/>
            <person name="Herrero E."/>
            <person name="Heumann K."/>
            <person name="Hiesel R."/>
            <person name="Hilger F."/>
            <person name="Hofmann B."/>
            <person name="Hollenberg C.P."/>
            <person name="Hughes B."/>
            <person name="Jauniaux J.-C."/>
            <person name="Kalogeropoulos A."/>
            <person name="Katsoulou C."/>
            <person name="Kordes E."/>
            <person name="Lafuente M.J."/>
            <person name="Landt O."/>
            <person name="Louis E.J."/>
            <person name="Maarse A.C."/>
            <person name="Madania A."/>
            <person name="Mannhaupt G."/>
            <person name="Marck C."/>
            <person name="Martin R.P."/>
            <person name="Mewes H.-W."/>
            <person name="Michaux G."/>
            <person name="Paces V."/>
            <person name="Parle-McDermott A.G."/>
            <person name="Pearson B.M."/>
            <person name="Perrin A."/>
            <person name="Pettersson B."/>
            <person name="Poch O."/>
            <person name="Pohl T.M."/>
            <person name="Poirey R."/>
            <person name="Portetelle D."/>
            <person name="Pujol A."/>
            <person name="Purnelle B."/>
            <person name="Ramezani Rad M."/>
            <person name="Rechmann S."/>
            <person name="Schwager C."/>
            <person name="Schweizer M."/>
            <person name="Sor F."/>
            <person name="Sterky F."/>
            <person name="Tarassov I.A."/>
            <person name="Teodoru C."/>
            <person name="Tettelin H."/>
            <person name="Thierry A."/>
            <person name="Tobiasch E."/>
            <person name="Tzermia M."/>
            <person name="Uhlen M."/>
            <person name="Unseld M."/>
            <person name="Valens M."/>
            <person name="Vandenbol M."/>
            <person name="Vetter I."/>
            <person name="Vlcek C."/>
            <person name="Voet M."/>
            <person name="Volckaert G."/>
            <person name="Voss H."/>
            <person name="Wambutt R."/>
            <person name="Wedler H."/>
            <person name="Wiemann S."/>
            <person name="Winsor B."/>
            <person name="Wolfe K.H."/>
            <person name="Zollner A."/>
            <person name="Zumstein E."/>
            <person name="Kleine K."/>
        </authorList>
    </citation>
    <scope>NUCLEOTIDE SEQUENCE [LARGE SCALE GENOMIC DNA]</scope>
    <source>
        <strain>ATCC 204508 / S288c</strain>
    </source>
</reference>
<reference key="4">
    <citation type="journal article" date="2014" name="G3 (Bethesda)">
        <title>The reference genome sequence of Saccharomyces cerevisiae: Then and now.</title>
        <authorList>
            <person name="Engel S.R."/>
            <person name="Dietrich F.S."/>
            <person name="Fisk D.G."/>
            <person name="Binkley G."/>
            <person name="Balakrishnan R."/>
            <person name="Costanzo M.C."/>
            <person name="Dwight S.S."/>
            <person name="Hitz B.C."/>
            <person name="Karra K."/>
            <person name="Nash R.S."/>
            <person name="Weng S."/>
            <person name="Wong E.D."/>
            <person name="Lloyd P."/>
            <person name="Skrzypek M.S."/>
            <person name="Miyasato S.R."/>
            <person name="Simison M."/>
            <person name="Cherry J.M."/>
        </authorList>
    </citation>
    <scope>GENOME REANNOTATION</scope>
    <source>
        <strain>ATCC 204508 / S288c</strain>
    </source>
</reference>
<reference key="5">
    <citation type="submission" date="1992-04" db="EMBL/GenBank/DDBJ databases">
        <authorList>
            <person name="Waldherr M."/>
            <person name="Voskova A."/>
            <person name="Schweyen R.J."/>
        </authorList>
    </citation>
    <scope>NUCLEOTIDE SEQUENCE [GENOMIC DNA] OF 132-594</scope>
</reference>
<reference key="6">
    <citation type="journal article" date="1993" name="Nat. Genet.">
        <title>MRS6 -- yeast homologue of the choroideraemia gene.</title>
        <authorList>
            <person name="Waldherr M."/>
            <person name="Ragnini R.J."/>
            <person name="Schweyen R.J."/>
            <person name="Boguski M.S."/>
        </authorList>
    </citation>
    <scope>SIMILARITY TO CHOROIDEREMIA PROTEIN</scope>
</reference>
<reference key="7">
    <citation type="journal article" date="2003" name="Nature">
        <title>Global analysis of protein expression in yeast.</title>
        <authorList>
            <person name="Ghaemmaghami S."/>
            <person name="Huh W.-K."/>
            <person name="Bower K."/>
            <person name="Howson R.W."/>
            <person name="Belle A."/>
            <person name="Dephoure N."/>
            <person name="O'Shea E.K."/>
            <person name="Weissman J.S."/>
        </authorList>
    </citation>
    <scope>LEVEL OF PROTEIN EXPRESSION [LARGE SCALE ANALYSIS]</scope>
</reference>
<reference key="8">
    <citation type="journal article" date="2005" name="Mol. Cell. Proteomics">
        <title>Quantitative phosphoproteomics applied to the yeast pheromone signaling pathway.</title>
        <authorList>
            <person name="Gruhler A."/>
            <person name="Olsen J.V."/>
            <person name="Mohammed S."/>
            <person name="Mortensen P."/>
            <person name="Faergeman N.J."/>
            <person name="Mann M."/>
            <person name="Jensen O.N."/>
        </authorList>
    </citation>
    <scope>PHOSPHORYLATION [LARGE SCALE ANALYSIS] AT SER-470</scope>
    <scope>IDENTIFICATION BY MASS SPECTROMETRY [LARGE SCALE ANALYSIS]</scope>
    <source>
        <strain>YAL6B</strain>
    </source>
</reference>
<reference key="9">
    <citation type="journal article" date="2007" name="J. Proteome Res.">
        <title>Large-scale phosphorylation analysis of alpha-factor-arrested Saccharomyces cerevisiae.</title>
        <authorList>
            <person name="Li X."/>
            <person name="Gerber S.A."/>
            <person name="Rudner A.D."/>
            <person name="Beausoleil S.A."/>
            <person name="Haas W."/>
            <person name="Villen J."/>
            <person name="Elias J.E."/>
            <person name="Gygi S.P."/>
        </authorList>
    </citation>
    <scope>PHOSPHORYLATION [LARGE SCALE ANALYSIS] AT SER-470</scope>
    <scope>IDENTIFICATION BY MASS SPECTROMETRY [LARGE SCALE ANALYSIS]</scope>
    <source>
        <strain>ADR376</strain>
    </source>
</reference>
<reference key="10">
    <citation type="journal article" date="2009" name="Science">
        <title>Global analysis of Cdk1 substrate phosphorylation sites provides insights into evolution.</title>
        <authorList>
            <person name="Holt L.J."/>
            <person name="Tuch B.B."/>
            <person name="Villen J."/>
            <person name="Johnson A.D."/>
            <person name="Gygi S.P."/>
            <person name="Morgan D.O."/>
        </authorList>
    </citation>
    <scope>IDENTIFICATION BY MASS SPECTROMETRY [LARGE SCALE ANALYSIS]</scope>
</reference>
<feature type="chain" id="PRO_0000056693" description="Rab proteins geranylgeranyltransferase component A">
    <location>
        <begin position="1"/>
        <end position="603"/>
    </location>
</feature>
<feature type="modified residue" description="Phosphoserine" evidence="3 4">
    <location>
        <position position="470"/>
    </location>
</feature>
<feature type="sequence conflict" description="In Ref. 5; AAA34796." evidence="2" ref="5">
    <original>DLSPKI</original>
    <variation>MIFPRV</variation>
    <location>
        <begin position="132"/>
        <end position="137"/>
    </location>
</feature>
<feature type="sequence conflict" description="In Ref. 2; CAA49804/CAA49805 and 5; AAA34796." evidence="2" ref="2 5">
    <original>A</original>
    <variation>P</variation>
    <location>
        <position position="300"/>
    </location>
</feature>
<protein>
    <recommendedName>
        <fullName>Rab proteins geranylgeranyltransferase component A</fullName>
    </recommendedName>
    <alternativeName>
        <fullName>Rab escort protein</fullName>
        <shortName>REP</shortName>
    </alternativeName>
</protein>
<evidence type="ECO:0000269" key="1">
    <source>
    </source>
</evidence>
<evidence type="ECO:0000305" key="2"/>
<evidence type="ECO:0007744" key="3">
    <source>
    </source>
</evidence>
<evidence type="ECO:0007744" key="4">
    <source>
    </source>
</evidence>